<feature type="chain" id="PRO_1000001843" description="Phosphate acyltransferase">
    <location>
        <begin position="1"/>
        <end position="330"/>
    </location>
</feature>
<keyword id="KW-0963">Cytoplasm</keyword>
<keyword id="KW-0444">Lipid biosynthesis</keyword>
<keyword id="KW-0443">Lipid metabolism</keyword>
<keyword id="KW-0594">Phospholipid biosynthesis</keyword>
<keyword id="KW-1208">Phospholipid metabolism</keyword>
<keyword id="KW-1185">Reference proteome</keyword>
<keyword id="KW-0808">Transferase</keyword>
<organism>
    <name type="scientific">Streptococcus pneumoniae serotype 2 (strain D39 / NCTC 7466)</name>
    <dbReference type="NCBI Taxonomy" id="373153"/>
    <lineage>
        <taxon>Bacteria</taxon>
        <taxon>Bacillati</taxon>
        <taxon>Bacillota</taxon>
        <taxon>Bacilli</taxon>
        <taxon>Lactobacillales</taxon>
        <taxon>Streptococcaceae</taxon>
        <taxon>Streptococcus</taxon>
    </lineage>
</organism>
<name>PLSX_STRP2</name>
<accession>Q04N31</accession>
<comment type="function">
    <text evidence="1">Catalyzes the reversible formation of acyl-phosphate (acyl-PO(4)) from acyl-[acyl-carrier-protein] (acyl-ACP). This enzyme utilizes acyl-ACP as fatty acyl donor, but not acyl-CoA.</text>
</comment>
<comment type="catalytic activity">
    <reaction evidence="1">
        <text>a fatty acyl-[ACP] + phosphate = an acyl phosphate + holo-[ACP]</text>
        <dbReference type="Rhea" id="RHEA:42292"/>
        <dbReference type="Rhea" id="RHEA-COMP:9685"/>
        <dbReference type="Rhea" id="RHEA-COMP:14125"/>
        <dbReference type="ChEBI" id="CHEBI:43474"/>
        <dbReference type="ChEBI" id="CHEBI:59918"/>
        <dbReference type="ChEBI" id="CHEBI:64479"/>
        <dbReference type="ChEBI" id="CHEBI:138651"/>
        <dbReference type="EC" id="2.3.1.274"/>
    </reaction>
</comment>
<comment type="pathway">
    <text evidence="1">Lipid metabolism; phospholipid metabolism.</text>
</comment>
<comment type="subunit">
    <text evidence="1">Homodimer. Probably interacts with PlsY.</text>
</comment>
<comment type="subcellular location">
    <subcellularLocation>
        <location evidence="1">Cytoplasm</location>
    </subcellularLocation>
    <text evidence="1">Associated with the membrane possibly through PlsY.</text>
</comment>
<comment type="similarity">
    <text evidence="1">Belongs to the PlsX family.</text>
</comment>
<sequence>MKKIAVDAMGGDYAPQAIVEGVNQALSDFSDIEVQLYGDEAKIKQYLTATERVSIIHTDEKIDSDDEPTRAIRNKKNASMVLAAKAVKDGEADAVLSAGNTGALLAAGFFIVGRIKNIDRPGLMSTLPTVDGKGFDMLDLGANAENTAQHLHQYAVLGSFYAKNVRGIAQPRVGLLNNGTESSKGDPLRKETYELLAADESLNFIGNVEARDLMNGVADVVVADGFTGNAVLKSIEGTAMGIMGLLKTAITGGGLRAKLGALLLKDSLRGLKKQLNYSDVGGAVLFGVKAPVVKTHGSSDAKAVYSTIRQIRTMLETDVVAQTAREFSGE</sequence>
<gene>
    <name evidence="1" type="primary">plsX</name>
    <name type="ordered locus">SPD_0043</name>
</gene>
<proteinExistence type="inferred from homology"/>
<reference key="1">
    <citation type="journal article" date="2007" name="J. Bacteriol.">
        <title>Genome sequence of Avery's virulent serotype 2 strain D39 of Streptococcus pneumoniae and comparison with that of unencapsulated laboratory strain R6.</title>
        <authorList>
            <person name="Lanie J.A."/>
            <person name="Ng W.-L."/>
            <person name="Kazmierczak K.M."/>
            <person name="Andrzejewski T.M."/>
            <person name="Davidsen T.M."/>
            <person name="Wayne K.J."/>
            <person name="Tettelin H."/>
            <person name="Glass J.I."/>
            <person name="Winkler M.E."/>
        </authorList>
    </citation>
    <scope>NUCLEOTIDE SEQUENCE [LARGE SCALE GENOMIC DNA]</scope>
    <source>
        <strain>D39 / NCTC 7466</strain>
    </source>
</reference>
<dbReference type="EC" id="2.3.1.274" evidence="1"/>
<dbReference type="EMBL" id="CP000410">
    <property type="protein sequence ID" value="ABJ54211.1"/>
    <property type="molecule type" value="Genomic_DNA"/>
</dbReference>
<dbReference type="RefSeq" id="WP_000717456.1">
    <property type="nucleotide sequence ID" value="NZ_JAMLJR010000021.1"/>
</dbReference>
<dbReference type="SMR" id="Q04N31"/>
<dbReference type="PaxDb" id="373153-SPD_0043"/>
<dbReference type="KEGG" id="spd:SPD_0043"/>
<dbReference type="eggNOG" id="COG0416">
    <property type="taxonomic scope" value="Bacteria"/>
</dbReference>
<dbReference type="HOGENOM" id="CLU_039379_1_1_9"/>
<dbReference type="BioCyc" id="SPNE373153:G1G6V-42-MONOMER"/>
<dbReference type="UniPathway" id="UPA00085"/>
<dbReference type="Proteomes" id="UP000001452">
    <property type="component" value="Chromosome"/>
</dbReference>
<dbReference type="GO" id="GO:0005737">
    <property type="term" value="C:cytoplasm"/>
    <property type="evidence" value="ECO:0007669"/>
    <property type="project" value="UniProtKB-SubCell"/>
</dbReference>
<dbReference type="GO" id="GO:0043811">
    <property type="term" value="F:phosphate:acyl-[acyl carrier protein] acyltransferase activity"/>
    <property type="evidence" value="ECO:0007669"/>
    <property type="project" value="UniProtKB-UniRule"/>
</dbReference>
<dbReference type="GO" id="GO:0006633">
    <property type="term" value="P:fatty acid biosynthetic process"/>
    <property type="evidence" value="ECO:0007669"/>
    <property type="project" value="UniProtKB-UniRule"/>
</dbReference>
<dbReference type="GO" id="GO:0008654">
    <property type="term" value="P:phospholipid biosynthetic process"/>
    <property type="evidence" value="ECO:0007669"/>
    <property type="project" value="UniProtKB-KW"/>
</dbReference>
<dbReference type="Gene3D" id="3.40.718.10">
    <property type="entry name" value="Isopropylmalate Dehydrogenase"/>
    <property type="match status" value="1"/>
</dbReference>
<dbReference type="HAMAP" id="MF_00019">
    <property type="entry name" value="PlsX"/>
    <property type="match status" value="1"/>
</dbReference>
<dbReference type="InterPro" id="IPR003664">
    <property type="entry name" value="FA_synthesis"/>
</dbReference>
<dbReference type="InterPro" id="IPR012281">
    <property type="entry name" value="Phospholipid_synth_PlsX-like"/>
</dbReference>
<dbReference type="NCBIfam" id="TIGR00182">
    <property type="entry name" value="plsX"/>
    <property type="match status" value="1"/>
</dbReference>
<dbReference type="PANTHER" id="PTHR30100">
    <property type="entry name" value="FATTY ACID/PHOSPHOLIPID SYNTHESIS PROTEIN PLSX"/>
    <property type="match status" value="1"/>
</dbReference>
<dbReference type="PANTHER" id="PTHR30100:SF1">
    <property type="entry name" value="PHOSPHATE ACYLTRANSFERASE"/>
    <property type="match status" value="1"/>
</dbReference>
<dbReference type="Pfam" id="PF02504">
    <property type="entry name" value="FA_synthesis"/>
    <property type="match status" value="1"/>
</dbReference>
<dbReference type="PIRSF" id="PIRSF002465">
    <property type="entry name" value="Phsphlp_syn_PlsX"/>
    <property type="match status" value="1"/>
</dbReference>
<dbReference type="SUPFAM" id="SSF53659">
    <property type="entry name" value="Isocitrate/Isopropylmalate dehydrogenase-like"/>
    <property type="match status" value="1"/>
</dbReference>
<evidence type="ECO:0000255" key="1">
    <source>
        <dbReference type="HAMAP-Rule" id="MF_00019"/>
    </source>
</evidence>
<protein>
    <recommendedName>
        <fullName evidence="1">Phosphate acyltransferase</fullName>
        <ecNumber evidence="1">2.3.1.274</ecNumber>
    </recommendedName>
    <alternativeName>
        <fullName evidence="1">Acyl-ACP phosphotransacylase</fullName>
    </alternativeName>
    <alternativeName>
        <fullName evidence="1">Acyl-[acyl-carrier-protein]--phosphate acyltransferase</fullName>
    </alternativeName>
    <alternativeName>
        <fullName evidence="1">Phosphate-acyl-ACP acyltransferase</fullName>
    </alternativeName>
</protein>